<name>MIC13_MACFA</name>
<gene>
    <name evidence="1" type="primary">MICOS13</name>
    <name type="synonym">QIL1</name>
</gene>
<evidence type="ECO:0000250" key="1">
    <source>
        <dbReference type="UniProtKB" id="Q5XKP0"/>
    </source>
</evidence>
<evidence type="ECO:0000255" key="2"/>
<evidence type="ECO:0000305" key="3"/>
<keyword id="KW-0472">Membrane</keyword>
<keyword id="KW-0496">Mitochondrion</keyword>
<keyword id="KW-0999">Mitochondrion inner membrane</keyword>
<keyword id="KW-1185">Reference proteome</keyword>
<keyword id="KW-0812">Transmembrane</keyword>
<keyword id="KW-1133">Transmembrane helix</keyword>
<reference key="1">
    <citation type="submission" date="2004-02" db="EMBL/GenBank/DDBJ databases">
        <title>A novel retroposon P117 in the intergenic region of alpha-globin genes in the macaques.</title>
        <authorList>
            <person name="Takenaka A."/>
            <person name="Kawamoto S."/>
            <person name="Varavudhi P."/>
            <person name="Kawamoto Y."/>
            <person name="Suzuki J."/>
            <person name="Eakavibatha C."/>
            <person name="Terao K."/>
            <person name="Nakamura S."/>
            <person name="Hirai H."/>
            <person name="Takenaka O."/>
        </authorList>
    </citation>
    <scope>NUCLEOTIDE SEQUENCE [GENOMIC DNA]</scope>
</reference>
<dbReference type="EMBL" id="AB162658">
    <property type="protein sequence ID" value="BAE80090.1"/>
    <property type="molecule type" value="Genomic_DNA"/>
</dbReference>
<dbReference type="RefSeq" id="XP_005587700.1">
    <property type="nucleotide sequence ID" value="XM_005587643.4"/>
</dbReference>
<dbReference type="STRING" id="9541.ENSMFAP00000036309"/>
<dbReference type="Ensembl" id="ENSMFAT00000078010.1">
    <property type="protein sequence ID" value="ENSMFAP00000057897.1"/>
    <property type="gene ID" value="ENSMFAG00000034498.2"/>
</dbReference>
<dbReference type="GeneID" id="102138958"/>
<dbReference type="KEGG" id="mcf:102138958"/>
<dbReference type="CTD" id="125988"/>
<dbReference type="VEuPathDB" id="HostDB:ENSMFAG00000034498"/>
<dbReference type="eggNOG" id="ENOG502S4BC">
    <property type="taxonomic scope" value="Eukaryota"/>
</dbReference>
<dbReference type="GeneTree" id="ENSGT00390000002629"/>
<dbReference type="OMA" id="GWKYMKD"/>
<dbReference type="Proteomes" id="UP000233100">
    <property type="component" value="Chromosome 19"/>
</dbReference>
<dbReference type="Bgee" id="ENSMFAG00000034498">
    <property type="expression patterns" value="Expressed in heart and 13 other cell types or tissues"/>
</dbReference>
<dbReference type="GO" id="GO:0061617">
    <property type="term" value="C:MICOS complex"/>
    <property type="evidence" value="ECO:0000250"/>
    <property type="project" value="UniProtKB"/>
</dbReference>
<dbReference type="GO" id="GO:0044284">
    <property type="term" value="C:mitochondrial crista junction"/>
    <property type="evidence" value="ECO:0000250"/>
    <property type="project" value="UniProtKB"/>
</dbReference>
<dbReference type="GO" id="GO:0005743">
    <property type="term" value="C:mitochondrial inner membrane"/>
    <property type="evidence" value="ECO:0000250"/>
    <property type="project" value="UniProtKB"/>
</dbReference>
<dbReference type="GO" id="GO:0005654">
    <property type="term" value="C:nucleoplasm"/>
    <property type="evidence" value="ECO:0007669"/>
    <property type="project" value="Ensembl"/>
</dbReference>
<dbReference type="GO" id="GO:0042407">
    <property type="term" value="P:cristae formation"/>
    <property type="evidence" value="ECO:0000250"/>
    <property type="project" value="UniProtKB"/>
</dbReference>
<dbReference type="InterPro" id="IPR026769">
    <property type="entry name" value="Mic13"/>
</dbReference>
<dbReference type="PANTHER" id="PTHR31816">
    <property type="entry name" value="MICOS COMPLEX SUBUNIT MIC13"/>
    <property type="match status" value="1"/>
</dbReference>
<dbReference type="PANTHER" id="PTHR31816:SF3">
    <property type="entry name" value="MICOS COMPLEX SUBUNIT MIC13"/>
    <property type="match status" value="1"/>
</dbReference>
<dbReference type="Pfam" id="PF15884">
    <property type="entry name" value="QIL1"/>
    <property type="match status" value="1"/>
</dbReference>
<proteinExistence type="inferred from homology"/>
<protein>
    <recommendedName>
        <fullName evidence="1">MICOS complex subunit MIC13</fullName>
    </recommendedName>
    <alternativeName>
        <fullName>Protein P117</fullName>
    </alternativeName>
</protein>
<sequence length="118" mass="13055">MVARVWSLMRFLIKGSVAGGAVYLVYDQELLGPSDKSQAALQKAGEVVPPAVYQFSQYVCQQTGLQIPQLPAPPKIYFPIRDSWNAGIMTVMSALSVAPSKAREYSKEGWEYVKARTK</sequence>
<organism>
    <name type="scientific">Macaca fascicularis</name>
    <name type="common">Crab-eating macaque</name>
    <name type="synonym">Cynomolgus monkey</name>
    <dbReference type="NCBI Taxonomy" id="9541"/>
    <lineage>
        <taxon>Eukaryota</taxon>
        <taxon>Metazoa</taxon>
        <taxon>Chordata</taxon>
        <taxon>Craniata</taxon>
        <taxon>Vertebrata</taxon>
        <taxon>Euteleostomi</taxon>
        <taxon>Mammalia</taxon>
        <taxon>Eutheria</taxon>
        <taxon>Euarchontoglires</taxon>
        <taxon>Primates</taxon>
        <taxon>Haplorrhini</taxon>
        <taxon>Catarrhini</taxon>
        <taxon>Cercopithecidae</taxon>
        <taxon>Cercopithecinae</taxon>
        <taxon>Macaca</taxon>
    </lineage>
</organism>
<feature type="chain" id="PRO_0000289986" description="MICOS complex subunit MIC13">
    <location>
        <begin position="1"/>
        <end position="118"/>
    </location>
</feature>
<feature type="topological domain" description="Mitochondrial matrix" evidence="3">
    <location>
        <begin position="1"/>
        <end position="7"/>
    </location>
</feature>
<feature type="transmembrane region" description="Helical" evidence="2">
    <location>
        <begin position="8"/>
        <end position="26"/>
    </location>
</feature>
<feature type="topological domain" description="Mitochondrial intermembrane" evidence="3">
    <location>
        <begin position="27"/>
        <end position="118"/>
    </location>
</feature>
<comment type="function">
    <text evidence="1">Component of the MICOS complex, a large protein complex of the mitochondrial inner membrane that plays crucial roles in the maintenance of crista junctions, inner membrane architecture, and formation of contact sites to the outer membrane. Constituent of mature MICOS complex, it is required for the formation of cristae junction (CJ) and maintenance of cristae morphology. Required for the incorporation of MICOS10/MIC10 into the MICOS complex.</text>
</comment>
<comment type="subunit">
    <text evidence="1">Component of the mitochondrial contact site and cristae organizing system (MICOS) complex, composed of at least MICOS10/MIC10, CHCHD3/MIC19, CHCHD6/MIC25, APOO/MIC26, MICOS13/MIC13, APOOL/MIC27 and IMMT/MIC60. The complex associates with mitochondrial outer membrane proteins SAMM50, MTX1 and MTX2, and with HSPA9.</text>
</comment>
<comment type="subcellular location">
    <subcellularLocation>
        <location evidence="1">Mitochondrion inner membrane</location>
        <topology evidence="2">Single-pass membrane protein</topology>
    </subcellularLocation>
    <text evidence="1">Enriched at crista junctions.</text>
</comment>
<comment type="similarity">
    <text evidence="3">Belongs to the MICOS complex subunit Mic13 family.</text>
</comment>
<accession>Q2ACH7</accession>